<organism>
    <name type="scientific">Mus musculus</name>
    <name type="common">Mouse</name>
    <dbReference type="NCBI Taxonomy" id="10090"/>
    <lineage>
        <taxon>Eukaryota</taxon>
        <taxon>Metazoa</taxon>
        <taxon>Chordata</taxon>
        <taxon>Craniata</taxon>
        <taxon>Vertebrata</taxon>
        <taxon>Euteleostomi</taxon>
        <taxon>Mammalia</taxon>
        <taxon>Eutheria</taxon>
        <taxon>Euarchontoglires</taxon>
        <taxon>Glires</taxon>
        <taxon>Rodentia</taxon>
        <taxon>Myomorpha</taxon>
        <taxon>Muroidea</taxon>
        <taxon>Muridae</taxon>
        <taxon>Murinae</taxon>
        <taxon>Mus</taxon>
        <taxon>Mus</taxon>
    </lineage>
</organism>
<comment type="function">
    <text evidence="5">May be involved in osteoblast differentiation.</text>
</comment>
<comment type="catalytic activity">
    <reaction evidence="5">
        <text>L-seryl-[protein] + ATP = O-phospho-L-seryl-[protein] + ADP + H(+)</text>
        <dbReference type="Rhea" id="RHEA:17989"/>
        <dbReference type="Rhea" id="RHEA-COMP:9863"/>
        <dbReference type="Rhea" id="RHEA-COMP:11604"/>
        <dbReference type="ChEBI" id="CHEBI:15378"/>
        <dbReference type="ChEBI" id="CHEBI:29999"/>
        <dbReference type="ChEBI" id="CHEBI:30616"/>
        <dbReference type="ChEBI" id="CHEBI:83421"/>
        <dbReference type="ChEBI" id="CHEBI:456216"/>
        <dbReference type="EC" id="2.7.11.1"/>
    </reaction>
</comment>
<comment type="catalytic activity">
    <reaction evidence="5">
        <text>L-threonyl-[protein] + ATP = O-phospho-L-threonyl-[protein] + ADP + H(+)</text>
        <dbReference type="Rhea" id="RHEA:46608"/>
        <dbReference type="Rhea" id="RHEA-COMP:11060"/>
        <dbReference type="Rhea" id="RHEA-COMP:11605"/>
        <dbReference type="ChEBI" id="CHEBI:15378"/>
        <dbReference type="ChEBI" id="CHEBI:30013"/>
        <dbReference type="ChEBI" id="CHEBI:30616"/>
        <dbReference type="ChEBI" id="CHEBI:61977"/>
        <dbReference type="ChEBI" id="CHEBI:456216"/>
        <dbReference type="EC" id="2.7.11.1"/>
    </reaction>
</comment>
<comment type="subcellular location">
    <subcellularLocation>
        <location evidence="8">Nucleus</location>
    </subcellularLocation>
</comment>
<comment type="alternative products">
    <event type="alternative splicing"/>
    <isoform>
        <id>Q91Z96-1</id>
        <name>1</name>
        <sequence type="displayed"/>
    </isoform>
    <isoform>
        <id>Q91Z96-2</id>
        <name>2</name>
        <sequence type="described" ref="VSP_008094 VSP_008095"/>
    </isoform>
</comment>
<comment type="tissue specificity">
    <text evidence="5">Expressed in osteocytes and osteoblasts.</text>
</comment>
<comment type="PTM">
    <text evidence="5">Autophosphorylated.</text>
</comment>
<comment type="similarity">
    <text evidence="2">Belongs to the protein kinase superfamily. Ser/Thr protein kinase family.</text>
</comment>
<reference key="1">
    <citation type="journal article" date="2001" name="J. Biol. Chem.">
        <title>Cloning and characterization of a novel protein kinase that impairs osteoblast differentiation in vitro.</title>
        <authorList>
            <person name="Kearns A.E."/>
            <person name="Donohue M.M."/>
            <person name="Sanyal B."/>
            <person name="Demay M.B."/>
        </authorList>
    </citation>
    <scope>NUCLEOTIDE SEQUENCE [MRNA] (ISOFORM 1)</scope>
    <scope>FUNCTION</scope>
    <scope>CATALYTIC ACTIVITY</scope>
    <scope>SUBCELLULAR LOCATION</scope>
    <scope>TISSUE SPECIFICITY</scope>
    <source>
        <strain>C57BL/6J</strain>
    </source>
</reference>
<reference key="2">
    <citation type="journal article" date="2005" name="Science">
        <title>The transcriptional landscape of the mammalian genome.</title>
        <authorList>
            <person name="Carninci P."/>
            <person name="Kasukawa T."/>
            <person name="Katayama S."/>
            <person name="Gough J."/>
            <person name="Frith M.C."/>
            <person name="Maeda N."/>
            <person name="Oyama R."/>
            <person name="Ravasi T."/>
            <person name="Lenhard B."/>
            <person name="Wells C."/>
            <person name="Kodzius R."/>
            <person name="Shimokawa K."/>
            <person name="Bajic V.B."/>
            <person name="Brenner S.E."/>
            <person name="Batalov S."/>
            <person name="Forrest A.R."/>
            <person name="Zavolan M."/>
            <person name="Davis M.J."/>
            <person name="Wilming L.G."/>
            <person name="Aidinis V."/>
            <person name="Allen J.E."/>
            <person name="Ambesi-Impiombato A."/>
            <person name="Apweiler R."/>
            <person name="Aturaliya R.N."/>
            <person name="Bailey T.L."/>
            <person name="Bansal M."/>
            <person name="Baxter L."/>
            <person name="Beisel K.W."/>
            <person name="Bersano T."/>
            <person name="Bono H."/>
            <person name="Chalk A.M."/>
            <person name="Chiu K.P."/>
            <person name="Choudhary V."/>
            <person name="Christoffels A."/>
            <person name="Clutterbuck D.R."/>
            <person name="Crowe M.L."/>
            <person name="Dalla E."/>
            <person name="Dalrymple B.P."/>
            <person name="de Bono B."/>
            <person name="Della Gatta G."/>
            <person name="di Bernardo D."/>
            <person name="Down T."/>
            <person name="Engstrom P."/>
            <person name="Fagiolini M."/>
            <person name="Faulkner G."/>
            <person name="Fletcher C.F."/>
            <person name="Fukushima T."/>
            <person name="Furuno M."/>
            <person name="Futaki S."/>
            <person name="Gariboldi M."/>
            <person name="Georgii-Hemming P."/>
            <person name="Gingeras T.R."/>
            <person name="Gojobori T."/>
            <person name="Green R.E."/>
            <person name="Gustincich S."/>
            <person name="Harbers M."/>
            <person name="Hayashi Y."/>
            <person name="Hensch T.K."/>
            <person name="Hirokawa N."/>
            <person name="Hill D."/>
            <person name="Huminiecki L."/>
            <person name="Iacono M."/>
            <person name="Ikeo K."/>
            <person name="Iwama A."/>
            <person name="Ishikawa T."/>
            <person name="Jakt M."/>
            <person name="Kanapin A."/>
            <person name="Katoh M."/>
            <person name="Kawasawa Y."/>
            <person name="Kelso J."/>
            <person name="Kitamura H."/>
            <person name="Kitano H."/>
            <person name="Kollias G."/>
            <person name="Krishnan S.P."/>
            <person name="Kruger A."/>
            <person name="Kummerfeld S.K."/>
            <person name="Kurochkin I.V."/>
            <person name="Lareau L.F."/>
            <person name="Lazarevic D."/>
            <person name="Lipovich L."/>
            <person name="Liu J."/>
            <person name="Liuni S."/>
            <person name="McWilliam S."/>
            <person name="Madan Babu M."/>
            <person name="Madera M."/>
            <person name="Marchionni L."/>
            <person name="Matsuda H."/>
            <person name="Matsuzawa S."/>
            <person name="Miki H."/>
            <person name="Mignone F."/>
            <person name="Miyake S."/>
            <person name="Morris K."/>
            <person name="Mottagui-Tabar S."/>
            <person name="Mulder N."/>
            <person name="Nakano N."/>
            <person name="Nakauchi H."/>
            <person name="Ng P."/>
            <person name="Nilsson R."/>
            <person name="Nishiguchi S."/>
            <person name="Nishikawa S."/>
            <person name="Nori F."/>
            <person name="Ohara O."/>
            <person name="Okazaki Y."/>
            <person name="Orlando V."/>
            <person name="Pang K.C."/>
            <person name="Pavan W.J."/>
            <person name="Pavesi G."/>
            <person name="Pesole G."/>
            <person name="Petrovsky N."/>
            <person name="Piazza S."/>
            <person name="Reed J."/>
            <person name="Reid J.F."/>
            <person name="Ring B.Z."/>
            <person name="Ringwald M."/>
            <person name="Rost B."/>
            <person name="Ruan Y."/>
            <person name="Salzberg S.L."/>
            <person name="Sandelin A."/>
            <person name="Schneider C."/>
            <person name="Schoenbach C."/>
            <person name="Sekiguchi K."/>
            <person name="Semple C.A."/>
            <person name="Seno S."/>
            <person name="Sessa L."/>
            <person name="Sheng Y."/>
            <person name="Shibata Y."/>
            <person name="Shimada H."/>
            <person name="Shimada K."/>
            <person name="Silva D."/>
            <person name="Sinclair B."/>
            <person name="Sperling S."/>
            <person name="Stupka E."/>
            <person name="Sugiura K."/>
            <person name="Sultana R."/>
            <person name="Takenaka Y."/>
            <person name="Taki K."/>
            <person name="Tammoja K."/>
            <person name="Tan S.L."/>
            <person name="Tang S."/>
            <person name="Taylor M.S."/>
            <person name="Tegner J."/>
            <person name="Teichmann S.A."/>
            <person name="Ueda H.R."/>
            <person name="van Nimwegen E."/>
            <person name="Verardo R."/>
            <person name="Wei C.L."/>
            <person name="Yagi K."/>
            <person name="Yamanishi H."/>
            <person name="Zabarovsky E."/>
            <person name="Zhu S."/>
            <person name="Zimmer A."/>
            <person name="Hide W."/>
            <person name="Bult C."/>
            <person name="Grimmond S.M."/>
            <person name="Teasdale R.D."/>
            <person name="Liu E.T."/>
            <person name="Brusic V."/>
            <person name="Quackenbush J."/>
            <person name="Wahlestedt C."/>
            <person name="Mattick J.S."/>
            <person name="Hume D.A."/>
            <person name="Kai C."/>
            <person name="Sasaki D."/>
            <person name="Tomaru Y."/>
            <person name="Fukuda S."/>
            <person name="Kanamori-Katayama M."/>
            <person name="Suzuki M."/>
            <person name="Aoki J."/>
            <person name="Arakawa T."/>
            <person name="Iida J."/>
            <person name="Imamura K."/>
            <person name="Itoh M."/>
            <person name="Kato T."/>
            <person name="Kawaji H."/>
            <person name="Kawagashira N."/>
            <person name="Kawashima T."/>
            <person name="Kojima M."/>
            <person name="Kondo S."/>
            <person name="Konno H."/>
            <person name="Nakano K."/>
            <person name="Ninomiya N."/>
            <person name="Nishio T."/>
            <person name="Okada M."/>
            <person name="Plessy C."/>
            <person name="Shibata K."/>
            <person name="Shiraki T."/>
            <person name="Suzuki S."/>
            <person name="Tagami M."/>
            <person name="Waki K."/>
            <person name="Watahiki A."/>
            <person name="Okamura-Oho Y."/>
            <person name="Suzuki H."/>
            <person name="Kawai J."/>
            <person name="Hayashizaki Y."/>
        </authorList>
    </citation>
    <scope>NUCLEOTIDE SEQUENCE [LARGE SCALE MRNA] (ISOFORM 2)</scope>
    <source>
        <strain>C57BL/6J</strain>
        <tissue>Thymus</tissue>
    </source>
</reference>
<reference key="3">
    <citation type="journal article" date="2007" name="Proc. Natl. Acad. Sci. U.S.A.">
        <title>Large-scale phosphorylation analysis of mouse liver.</title>
        <authorList>
            <person name="Villen J."/>
            <person name="Beausoleil S.A."/>
            <person name="Gerber S.A."/>
            <person name="Gygi S.P."/>
        </authorList>
    </citation>
    <scope>PHOSPHORYLATION [LARGE SCALE ANALYSIS] AT SER-1010 AND SER-1013</scope>
    <scope>IDENTIFICATION BY MASS SPECTROMETRY [LARGE SCALE ANALYSIS]</scope>
    <source>
        <tissue>Liver</tissue>
    </source>
</reference>
<reference key="4">
    <citation type="journal article" date="2009" name="Immunity">
        <title>The phagosomal proteome in interferon-gamma-activated macrophages.</title>
        <authorList>
            <person name="Trost M."/>
            <person name="English L."/>
            <person name="Lemieux S."/>
            <person name="Courcelles M."/>
            <person name="Desjardins M."/>
            <person name="Thibault P."/>
        </authorList>
    </citation>
    <scope>PHOSPHORYLATION [LARGE SCALE ANALYSIS] AT SER-908; SER-1010; SER-1012 AND SER-1013</scope>
    <scope>IDENTIFICATION BY MASS SPECTROMETRY [LARGE SCALE ANALYSIS]</scope>
</reference>
<reference key="5">
    <citation type="journal article" date="2010" name="Cell">
        <title>A tissue-specific atlas of mouse protein phosphorylation and expression.</title>
        <authorList>
            <person name="Huttlin E.L."/>
            <person name="Jedrychowski M.P."/>
            <person name="Elias J.E."/>
            <person name="Goswami T."/>
            <person name="Rad R."/>
            <person name="Beausoleil S.A."/>
            <person name="Villen J."/>
            <person name="Haas W."/>
            <person name="Sowa M.E."/>
            <person name="Gygi S.P."/>
        </authorList>
    </citation>
    <scope>PHOSPHORYLATION [LARGE SCALE ANALYSIS] AT SER-13; SER-908 AND SER-1010</scope>
    <scope>IDENTIFICATION BY MASS SPECTROMETRY [LARGE SCALE ANALYSIS]</scope>
    <source>
        <tissue>Brain</tissue>
        <tissue>Heart</tissue>
        <tissue>Kidney</tissue>
        <tissue>Lung</tissue>
        <tissue>Pancreas</tissue>
        <tissue>Spleen</tissue>
        <tissue>Testis</tissue>
    </source>
</reference>
<name>BMP2K_MOUSE</name>
<protein>
    <recommendedName>
        <fullName evidence="6">BMP-2-inducible protein kinase</fullName>
        <shortName evidence="6">BIKe</shortName>
        <ecNumber evidence="5">2.7.11.1</ecNumber>
    </recommendedName>
</protein>
<evidence type="ECO:0000250" key="1">
    <source>
        <dbReference type="UniProtKB" id="Q9NSY1"/>
    </source>
</evidence>
<evidence type="ECO:0000255" key="2">
    <source>
        <dbReference type="PROSITE-ProRule" id="PRU00159"/>
    </source>
</evidence>
<evidence type="ECO:0000255" key="3">
    <source>
        <dbReference type="PROSITE-ProRule" id="PRU10027"/>
    </source>
</evidence>
<evidence type="ECO:0000256" key="4">
    <source>
        <dbReference type="SAM" id="MobiDB-lite"/>
    </source>
</evidence>
<evidence type="ECO:0000269" key="5">
    <source>
    </source>
</evidence>
<evidence type="ECO:0000303" key="6">
    <source>
    </source>
</evidence>
<evidence type="ECO:0000303" key="7">
    <source>
    </source>
</evidence>
<evidence type="ECO:0000305" key="8">
    <source>
    </source>
</evidence>
<evidence type="ECO:0007744" key="9">
    <source>
    </source>
</evidence>
<evidence type="ECO:0007744" key="10">
    <source>
    </source>
</evidence>
<evidence type="ECO:0007744" key="11">
    <source>
    </source>
</evidence>
<proteinExistence type="evidence at protein level"/>
<gene>
    <name type="primary">Bmp2k</name>
    <name type="synonym">Bike</name>
</gene>
<dbReference type="EC" id="2.7.11.1" evidence="5"/>
<dbReference type="EMBL" id="AY050249">
    <property type="protein sequence ID" value="AAK91585.1"/>
    <property type="molecule type" value="mRNA"/>
</dbReference>
<dbReference type="EMBL" id="AK046752">
    <property type="protein sequence ID" value="BAC32854.1"/>
    <property type="molecule type" value="mRNA"/>
</dbReference>
<dbReference type="CCDS" id="CCDS39175.1">
    <molecule id="Q91Z96-1"/>
</dbReference>
<dbReference type="RefSeq" id="NP_001406726.1">
    <molecule id="Q91Z96-2"/>
    <property type="nucleotide sequence ID" value="NM_001419797.1"/>
</dbReference>
<dbReference type="RefSeq" id="NP_542439.1">
    <molecule id="Q91Z96-1"/>
    <property type="nucleotide sequence ID" value="NM_080708.2"/>
</dbReference>
<dbReference type="SMR" id="Q91Z96"/>
<dbReference type="BioGRID" id="228314">
    <property type="interactions" value="6"/>
</dbReference>
<dbReference type="FunCoup" id="Q91Z96">
    <property type="interactions" value="4017"/>
</dbReference>
<dbReference type="STRING" id="10090.ENSMUSP00000037970"/>
<dbReference type="GlyGen" id="Q91Z96">
    <property type="glycosylation" value="3 sites, 1 O-linked glycan (2 sites)"/>
</dbReference>
<dbReference type="iPTMnet" id="Q91Z96"/>
<dbReference type="PhosphoSitePlus" id="Q91Z96"/>
<dbReference type="jPOST" id="Q91Z96"/>
<dbReference type="PaxDb" id="10090-ENSMUSP00000037970"/>
<dbReference type="PeptideAtlas" id="Q91Z96"/>
<dbReference type="ProteomicsDB" id="265218">
    <molecule id="Q91Z96-1"/>
</dbReference>
<dbReference type="ProteomicsDB" id="265219">
    <molecule id="Q91Z96-2"/>
</dbReference>
<dbReference type="Pumba" id="Q91Z96"/>
<dbReference type="Antibodypedia" id="24948">
    <property type="antibodies" value="192 antibodies from 27 providers"/>
</dbReference>
<dbReference type="DNASU" id="140780"/>
<dbReference type="Ensembl" id="ENSMUST00000035635.10">
    <molecule id="Q91Z96-1"/>
    <property type="protein sequence ID" value="ENSMUSP00000037970.8"/>
    <property type="gene ID" value="ENSMUSG00000034663.14"/>
</dbReference>
<dbReference type="Ensembl" id="ENSMUST00000112974.6">
    <molecule id="Q91Z96-2"/>
    <property type="protein sequence ID" value="ENSMUSP00000108598.2"/>
    <property type="gene ID" value="ENSMUSG00000034663.14"/>
</dbReference>
<dbReference type="GeneID" id="140780"/>
<dbReference type="KEGG" id="mmu:140780"/>
<dbReference type="UCSC" id="uc008yfo.1">
    <molecule id="Q91Z96-2"/>
    <property type="organism name" value="mouse"/>
</dbReference>
<dbReference type="UCSC" id="uc008yfp.1">
    <molecule id="Q91Z96-1"/>
    <property type="organism name" value="mouse"/>
</dbReference>
<dbReference type="AGR" id="MGI:2155456"/>
<dbReference type="CTD" id="55589"/>
<dbReference type="MGI" id="MGI:2155456">
    <property type="gene designation" value="Bmp2k"/>
</dbReference>
<dbReference type="VEuPathDB" id="HostDB:ENSMUSG00000034663"/>
<dbReference type="eggNOG" id="KOG1989">
    <property type="taxonomic scope" value="Eukaryota"/>
</dbReference>
<dbReference type="GeneTree" id="ENSGT00940000157548"/>
<dbReference type="HOGENOM" id="CLU_000288_109_5_1"/>
<dbReference type="InParanoid" id="Q91Z96"/>
<dbReference type="OMA" id="YPTVMQQ"/>
<dbReference type="OrthoDB" id="2018507at2759"/>
<dbReference type="PhylomeDB" id="Q91Z96"/>
<dbReference type="TreeFam" id="TF317300"/>
<dbReference type="BioGRID-ORCS" id="140780">
    <property type="hits" value="2 hits in 81 CRISPR screens"/>
</dbReference>
<dbReference type="ChiTaRS" id="Bmp2k">
    <property type="organism name" value="mouse"/>
</dbReference>
<dbReference type="PRO" id="PR:Q91Z96"/>
<dbReference type="Proteomes" id="UP000000589">
    <property type="component" value="Chromosome 5"/>
</dbReference>
<dbReference type="RNAct" id="Q91Z96">
    <property type="molecule type" value="protein"/>
</dbReference>
<dbReference type="Bgee" id="ENSMUSG00000034663">
    <property type="expression patterns" value="Expressed in secondary oocyte and 236 other cell types or tissues"/>
</dbReference>
<dbReference type="GO" id="GO:0016607">
    <property type="term" value="C:nuclear speck"/>
    <property type="evidence" value="ECO:0007669"/>
    <property type="project" value="Ensembl"/>
</dbReference>
<dbReference type="GO" id="GO:0005634">
    <property type="term" value="C:nucleus"/>
    <property type="evidence" value="ECO:0000314"/>
    <property type="project" value="MGI"/>
</dbReference>
<dbReference type="GO" id="GO:0005524">
    <property type="term" value="F:ATP binding"/>
    <property type="evidence" value="ECO:0007669"/>
    <property type="project" value="UniProtKB-KW"/>
</dbReference>
<dbReference type="GO" id="GO:0019208">
    <property type="term" value="F:phosphatase regulator activity"/>
    <property type="evidence" value="ECO:0000314"/>
    <property type="project" value="MGI"/>
</dbReference>
<dbReference type="GO" id="GO:0004672">
    <property type="term" value="F:protein kinase activity"/>
    <property type="evidence" value="ECO:0000314"/>
    <property type="project" value="MGI"/>
</dbReference>
<dbReference type="GO" id="GO:0106310">
    <property type="term" value="F:protein serine kinase activity"/>
    <property type="evidence" value="ECO:0007669"/>
    <property type="project" value="RHEA"/>
</dbReference>
<dbReference type="GO" id="GO:0004674">
    <property type="term" value="F:protein serine/threonine kinase activity"/>
    <property type="evidence" value="ECO:0007669"/>
    <property type="project" value="UniProtKB-KW"/>
</dbReference>
<dbReference type="GO" id="GO:0030500">
    <property type="term" value="P:regulation of bone mineralization"/>
    <property type="evidence" value="ECO:0000314"/>
    <property type="project" value="MGI"/>
</dbReference>
<dbReference type="CDD" id="cd14037">
    <property type="entry name" value="STKc_NAK_like"/>
    <property type="match status" value="1"/>
</dbReference>
<dbReference type="FunFam" id="1.10.510.10:FF:000072">
    <property type="entry name" value="AP2 associated kinase 1"/>
    <property type="match status" value="1"/>
</dbReference>
<dbReference type="Gene3D" id="1.10.510.10">
    <property type="entry name" value="Transferase(Phosphotransferase) domain 1"/>
    <property type="match status" value="1"/>
</dbReference>
<dbReference type="InterPro" id="IPR051744">
    <property type="entry name" value="AP2_assoc_SerThr_kinase"/>
</dbReference>
<dbReference type="InterPro" id="IPR028182">
    <property type="entry name" value="BMP2K_C"/>
</dbReference>
<dbReference type="InterPro" id="IPR011009">
    <property type="entry name" value="Kinase-like_dom_sf"/>
</dbReference>
<dbReference type="InterPro" id="IPR000719">
    <property type="entry name" value="Prot_kinase_dom"/>
</dbReference>
<dbReference type="InterPro" id="IPR008271">
    <property type="entry name" value="Ser/Thr_kinase_AS"/>
</dbReference>
<dbReference type="PANTHER" id="PTHR47907:SF4">
    <property type="entry name" value="BMP-2-INDUCIBLE PROTEIN KINASE ISOFORM X1"/>
    <property type="match status" value="1"/>
</dbReference>
<dbReference type="PANTHER" id="PTHR47907">
    <property type="entry name" value="PROTEIN KINASE DOMAIN-CONTAINING PROTEIN"/>
    <property type="match status" value="1"/>
</dbReference>
<dbReference type="Pfam" id="PF15282">
    <property type="entry name" value="BMP2K_C"/>
    <property type="match status" value="1"/>
</dbReference>
<dbReference type="Pfam" id="PF00069">
    <property type="entry name" value="Pkinase"/>
    <property type="match status" value="1"/>
</dbReference>
<dbReference type="SMART" id="SM00220">
    <property type="entry name" value="S_TKc"/>
    <property type="match status" value="1"/>
</dbReference>
<dbReference type="SUPFAM" id="SSF56112">
    <property type="entry name" value="Protein kinase-like (PK-like)"/>
    <property type="match status" value="1"/>
</dbReference>
<dbReference type="PROSITE" id="PS50011">
    <property type="entry name" value="PROTEIN_KINASE_DOM"/>
    <property type="match status" value="1"/>
</dbReference>
<dbReference type="PROSITE" id="PS00108">
    <property type="entry name" value="PROTEIN_KINASE_ST"/>
    <property type="match status" value="1"/>
</dbReference>
<feature type="chain" id="PRO_0000085664" description="BMP-2-inducible protein kinase">
    <location>
        <begin position="1"/>
        <end position="1138"/>
    </location>
</feature>
<feature type="domain" description="Protein kinase" evidence="2">
    <location>
        <begin position="48"/>
        <end position="313"/>
    </location>
</feature>
<feature type="region of interest" description="Disordered" evidence="4">
    <location>
        <begin position="355"/>
        <end position="435"/>
    </location>
</feature>
<feature type="region of interest" description="Disordered" evidence="4">
    <location>
        <begin position="638"/>
        <end position="831"/>
    </location>
</feature>
<feature type="region of interest" description="Disordered" evidence="4">
    <location>
        <begin position="906"/>
        <end position="1018"/>
    </location>
</feature>
<feature type="region of interest" description="Disordered" evidence="4">
    <location>
        <begin position="1117"/>
        <end position="1138"/>
    </location>
</feature>
<feature type="compositionally biased region" description="Polar residues" evidence="4">
    <location>
        <begin position="358"/>
        <end position="390"/>
    </location>
</feature>
<feature type="compositionally biased region" description="Low complexity" evidence="4">
    <location>
        <begin position="417"/>
        <end position="435"/>
    </location>
</feature>
<feature type="compositionally biased region" description="Polar residues" evidence="4">
    <location>
        <begin position="684"/>
        <end position="701"/>
    </location>
</feature>
<feature type="compositionally biased region" description="Basic and acidic residues" evidence="4">
    <location>
        <begin position="706"/>
        <end position="715"/>
    </location>
</feature>
<feature type="compositionally biased region" description="Basic and acidic residues" evidence="4">
    <location>
        <begin position="787"/>
        <end position="813"/>
    </location>
</feature>
<feature type="compositionally biased region" description="Polar residues" evidence="4">
    <location>
        <begin position="915"/>
        <end position="926"/>
    </location>
</feature>
<feature type="compositionally biased region" description="Basic residues" evidence="4">
    <location>
        <begin position="951"/>
        <end position="965"/>
    </location>
</feature>
<feature type="active site" description="Proton acceptor" evidence="2 3">
    <location>
        <position position="177"/>
    </location>
</feature>
<feature type="binding site" evidence="2">
    <location>
        <begin position="54"/>
        <end position="62"/>
    </location>
    <ligand>
        <name>ATP</name>
        <dbReference type="ChEBI" id="CHEBI:30616"/>
    </ligand>
</feature>
<feature type="binding site" evidence="2">
    <location>
        <position position="76"/>
    </location>
    <ligand>
        <name>ATP</name>
        <dbReference type="ChEBI" id="CHEBI:30616"/>
    </ligand>
</feature>
<feature type="modified residue" description="Phosphoserine" evidence="11">
    <location>
        <position position="13"/>
    </location>
</feature>
<feature type="modified residue" description="Phosphoserine" evidence="1">
    <location>
        <position position="676"/>
    </location>
</feature>
<feature type="modified residue" description="Phosphoserine" evidence="1">
    <location>
        <position position="733"/>
    </location>
</feature>
<feature type="modified residue" description="Phosphoserine" evidence="1">
    <location>
        <position position="806"/>
    </location>
</feature>
<feature type="modified residue" description="Phosphoserine" evidence="1">
    <location>
        <position position="807"/>
    </location>
</feature>
<feature type="modified residue" description="Phosphothreonine" evidence="1">
    <location>
        <position position="819"/>
    </location>
</feature>
<feature type="modified residue" description="Phosphoserine" evidence="10 11">
    <location>
        <position position="908"/>
    </location>
</feature>
<feature type="modified residue" description="Phosphoserine" evidence="9 10 11">
    <location>
        <position position="1010"/>
    </location>
</feature>
<feature type="modified residue" description="Phosphoserine" evidence="10">
    <location>
        <position position="1012"/>
    </location>
</feature>
<feature type="modified residue" description="Phosphoserine" evidence="9 10">
    <location>
        <position position="1013"/>
    </location>
</feature>
<feature type="modified residue" description="Phosphoserine" evidence="1">
    <location>
        <position position="1020"/>
    </location>
</feature>
<feature type="modified residue" description="Phosphoserine" evidence="1">
    <location>
        <position position="1022"/>
    </location>
</feature>
<feature type="modified residue" description="Phosphoserine" evidence="1">
    <location>
        <position position="1087"/>
    </location>
</feature>
<feature type="modified residue" description="Phosphoserine" evidence="1">
    <location>
        <position position="1091"/>
    </location>
</feature>
<feature type="splice variant" id="VSP_008094" description="In isoform 2." evidence="7">
    <original>NRLGASTPSDKT</original>
    <variation>SKGHLKAYFASQ</variation>
    <location>
        <begin position="638"/>
        <end position="649"/>
    </location>
</feature>
<feature type="splice variant" id="VSP_008095" description="In isoform 2." evidence="7">
    <location>
        <begin position="650"/>
        <end position="1138"/>
    </location>
</feature>
<sequence>MKKFSRMPKSEGSGGGAAAGGAAGGGLGGGFASSSMGVRVFAVGRYQVTLEESLAEGGFSTVFLVRTHSGIRCALKRMYVNNTPDLNICKREITIMKELSGHKNIVGYLDCAVNSISDNVWEVLILMEYCRAGQVVNQMNKKLQTGFTESEVLQIFCDTCEAVARLHQCKTPIIHRDLKVENILLNDAGNYVLCDFGSATNKFLNPQKDGVNVVEEEIKKYTTLSYRAPEMINLYGGKPITTKADIWALGCLLYKLCFFTLPFGESQVAICDGSFTIPDNSRYSHNVHCLIRFMLEPDPECRPDIFQVSYFAFKFAKKDCPVSNINNSFLPSTLPEPMTATEAAARKSQMKARITDTIGPTETSIAPRQRPKANSTAATSSVLTIQSSATPVKVPAPGEFSNHKPKGALRPGNGSEVLMVQGPPQQPPQQHRVLQQLQQGDWRLQQLHLHRHPHHHHQQQQQQQQQQQQQQLQQQQQQQQQLLQNAYLQQYQHAMHQQHILQQQFLMHSVYQPQPPASQYPAMMQQYQQAFLQQQMLARHQQPAQQVSPEYLTSPQEFSPALVSYASSLPAQVGTIVDSSYGANRSVAEKEAVANFTNQKTISHPPDMSGWNPFGEDNFSKLTEEELLDREFDLLRSNRLGASTPSDKTVDLPPAPHSRPPEEPFASVPFISHSGSPEKKTTEHSPNQKSITANLTKNGGSSPLCKDQRAGKKTSENPVIRGQVQKGHDDSESDFESDPPSPKSSEEEQEDEDAQGEHGDFNDDDTEPENLGHRPLLMDSEDEEEDDKHSSDSECEQAKTKRGDTSSLRRDKPGVAPDTALLTPARSPADALTPSQEFDVFGAVPFFAAPAPQSLQHRGDGKNLSQHAFPEQEDFDVFTKAPFNKKVSVQDWPAVGPDARPLPARPRSVDIFGSTPFQPFSVSASKSESKEDVFGLVPFEEITGSQQQQKVKQRSLQKLSSRQRRTKQDVSKSNGKRHHGTPTSAKKTLKPPYRTPERARRHKKVGRRDSQSSNEFLTISDSKENISVALTDGKDRASVLPSDESLLDPFGAKPFHPPDLWHQPHQGLSDICVDHTTILPGRPRQNSVHGSFHSAETLRMDDFGAVPFTELVVQSVTPQQSQPVELDPFGAAPFPSKQ</sequence>
<keyword id="KW-0025">Alternative splicing</keyword>
<keyword id="KW-0067">ATP-binding</keyword>
<keyword id="KW-0418">Kinase</keyword>
<keyword id="KW-0547">Nucleotide-binding</keyword>
<keyword id="KW-0539">Nucleus</keyword>
<keyword id="KW-0597">Phosphoprotein</keyword>
<keyword id="KW-1185">Reference proteome</keyword>
<keyword id="KW-0723">Serine/threonine-protein kinase</keyword>
<keyword id="KW-0808">Transferase</keyword>
<accession>Q91Z96</accession>
<accession>Q8C8L7</accession>